<keyword id="KW-0051">Antiviral defense</keyword>
<keyword id="KW-0930">Antiviral protein</keyword>
<keyword id="KW-0067">ATP-binding</keyword>
<keyword id="KW-0347">Helicase</keyword>
<keyword id="KW-0378">Hydrolase</keyword>
<keyword id="KW-0547">Nucleotide-binding</keyword>
<keyword id="KW-1185">Reference proteome</keyword>
<keyword id="KW-0677">Repeat</keyword>
<keyword id="KW-0694">RNA-binding</keyword>
<protein>
    <recommendedName>
        <fullName>Dicer-like protein 2-2</fullName>
    </recommendedName>
    <domain>
        <recommendedName>
            <fullName>Endoribonuclease dcl2-2</fullName>
            <ecNumber>3.1.26.-</ecNumber>
        </recommendedName>
    </domain>
    <domain>
        <recommendedName>
            <fullName>ATP-dependent helicase dcl2-2</fullName>
            <ecNumber>3.6.4.-</ecNumber>
        </recommendedName>
    </domain>
</protein>
<comment type="function">
    <text evidence="1">Dicer-like endonuclease involved in cleaving double-stranded RNA in the RNA interference (RNAi) pathway. Produces 21 to 25 bp dsRNAs (siRNAs) which target the selective destruction of homologous RNAs leading to sequence-specific suppression of gene expression, called post-transcriptional gene silencing (PTGS). Part of a broad host defense response against viral infection and transposons (By similarity).</text>
</comment>
<comment type="similarity">
    <text evidence="5">Belongs to the helicase family. Dicer subfamily.</text>
</comment>
<comment type="sequence caution" evidence="6">
    <conflict type="erroneous gene model prediction">
        <sequence resource="EMBL-CDS" id="CAK40801"/>
    </conflict>
</comment>
<organism>
    <name type="scientific">Aspergillus niger (strain ATCC MYA-4892 / CBS 513.88 / FGSC A1513)</name>
    <dbReference type="NCBI Taxonomy" id="425011"/>
    <lineage>
        <taxon>Eukaryota</taxon>
        <taxon>Fungi</taxon>
        <taxon>Dikarya</taxon>
        <taxon>Ascomycota</taxon>
        <taxon>Pezizomycotina</taxon>
        <taxon>Eurotiomycetes</taxon>
        <taxon>Eurotiomycetidae</taxon>
        <taxon>Eurotiales</taxon>
        <taxon>Aspergillaceae</taxon>
        <taxon>Aspergillus</taxon>
        <taxon>Aspergillus subgen. Circumdati</taxon>
    </lineage>
</organism>
<evidence type="ECO:0000250" key="1"/>
<evidence type="ECO:0000255" key="2">
    <source>
        <dbReference type="PROSITE-ProRule" id="PRU00177"/>
    </source>
</evidence>
<evidence type="ECO:0000255" key="3">
    <source>
        <dbReference type="PROSITE-ProRule" id="PRU00541"/>
    </source>
</evidence>
<evidence type="ECO:0000255" key="4">
    <source>
        <dbReference type="PROSITE-ProRule" id="PRU00542"/>
    </source>
</evidence>
<evidence type="ECO:0000255" key="5">
    <source>
        <dbReference type="PROSITE-ProRule" id="PRU00657"/>
    </source>
</evidence>
<evidence type="ECO:0000305" key="6"/>
<dbReference type="EC" id="3.1.26.-"/>
<dbReference type="EC" id="3.6.4.-"/>
<dbReference type="EMBL" id="AM270243">
    <property type="protein sequence ID" value="CAK40801.1"/>
    <property type="status" value="ALT_SEQ"/>
    <property type="molecule type" value="Genomic_DNA"/>
</dbReference>
<dbReference type="RefSeq" id="XP_001394728.2">
    <property type="nucleotide sequence ID" value="XM_001394691.2"/>
</dbReference>
<dbReference type="SMR" id="A2QX45"/>
<dbReference type="EnsemblFungi" id="CAK40801">
    <property type="protein sequence ID" value="CAK40801"/>
    <property type="gene ID" value="An11g07590"/>
</dbReference>
<dbReference type="GeneID" id="4984978"/>
<dbReference type="KEGG" id="ang:An11g07590"/>
<dbReference type="Proteomes" id="UP000006706">
    <property type="component" value="Chromosome 7R"/>
</dbReference>
<dbReference type="GO" id="GO:0005737">
    <property type="term" value="C:cytoplasm"/>
    <property type="evidence" value="ECO:0007669"/>
    <property type="project" value="TreeGrafter"/>
</dbReference>
<dbReference type="GO" id="GO:0005634">
    <property type="term" value="C:nucleus"/>
    <property type="evidence" value="ECO:0007669"/>
    <property type="project" value="TreeGrafter"/>
</dbReference>
<dbReference type="GO" id="GO:0005524">
    <property type="term" value="F:ATP binding"/>
    <property type="evidence" value="ECO:0007669"/>
    <property type="project" value="UniProtKB-KW"/>
</dbReference>
<dbReference type="GO" id="GO:0004386">
    <property type="term" value="F:helicase activity"/>
    <property type="evidence" value="ECO:0007669"/>
    <property type="project" value="UniProtKB-KW"/>
</dbReference>
<dbReference type="GO" id="GO:0004525">
    <property type="term" value="F:ribonuclease III activity"/>
    <property type="evidence" value="ECO:0007669"/>
    <property type="project" value="InterPro"/>
</dbReference>
<dbReference type="GO" id="GO:0003723">
    <property type="term" value="F:RNA binding"/>
    <property type="evidence" value="ECO:0007669"/>
    <property type="project" value="UniProtKB-KW"/>
</dbReference>
<dbReference type="GO" id="GO:0051607">
    <property type="term" value="P:defense response to virus"/>
    <property type="evidence" value="ECO:0007669"/>
    <property type="project" value="UniProtKB-KW"/>
</dbReference>
<dbReference type="GO" id="GO:0050688">
    <property type="term" value="P:regulation of defense response to virus"/>
    <property type="evidence" value="ECO:0007669"/>
    <property type="project" value="UniProtKB-KW"/>
</dbReference>
<dbReference type="GO" id="GO:0030422">
    <property type="term" value="P:siRNA processing"/>
    <property type="evidence" value="ECO:0007669"/>
    <property type="project" value="TreeGrafter"/>
</dbReference>
<dbReference type="CDD" id="cd18034">
    <property type="entry name" value="DEXHc_dicer"/>
    <property type="match status" value="1"/>
</dbReference>
<dbReference type="CDD" id="cd00593">
    <property type="entry name" value="RIBOc"/>
    <property type="match status" value="2"/>
</dbReference>
<dbReference type="CDD" id="cd18802">
    <property type="entry name" value="SF2_C_dicer"/>
    <property type="match status" value="1"/>
</dbReference>
<dbReference type="Gene3D" id="3.30.160.380">
    <property type="entry name" value="Dicer dimerisation domain"/>
    <property type="match status" value="1"/>
</dbReference>
<dbReference type="Gene3D" id="3.40.50.300">
    <property type="entry name" value="P-loop containing nucleotide triphosphate hydrolases"/>
    <property type="match status" value="2"/>
</dbReference>
<dbReference type="Gene3D" id="1.10.1520.10">
    <property type="entry name" value="Ribonuclease III domain"/>
    <property type="match status" value="2"/>
</dbReference>
<dbReference type="InterPro" id="IPR011545">
    <property type="entry name" value="DEAD/DEAH_box_helicase_dom"/>
</dbReference>
<dbReference type="InterPro" id="IPR038248">
    <property type="entry name" value="Dicer_dimer_sf"/>
</dbReference>
<dbReference type="InterPro" id="IPR005034">
    <property type="entry name" value="Dicer_dimerisation_dom"/>
</dbReference>
<dbReference type="InterPro" id="IPR014001">
    <property type="entry name" value="Helicase_ATP-bd"/>
</dbReference>
<dbReference type="InterPro" id="IPR001650">
    <property type="entry name" value="Helicase_C-like"/>
</dbReference>
<dbReference type="InterPro" id="IPR027417">
    <property type="entry name" value="P-loop_NTPase"/>
</dbReference>
<dbReference type="InterPro" id="IPR000999">
    <property type="entry name" value="RNase_III_dom"/>
</dbReference>
<dbReference type="InterPro" id="IPR036389">
    <property type="entry name" value="RNase_III_sf"/>
</dbReference>
<dbReference type="PANTHER" id="PTHR14950">
    <property type="entry name" value="DICER-RELATED"/>
    <property type="match status" value="1"/>
</dbReference>
<dbReference type="PANTHER" id="PTHR14950:SF37">
    <property type="entry name" value="ENDORIBONUCLEASE DICER"/>
    <property type="match status" value="1"/>
</dbReference>
<dbReference type="Pfam" id="PF00270">
    <property type="entry name" value="DEAD"/>
    <property type="match status" value="1"/>
</dbReference>
<dbReference type="Pfam" id="PF03368">
    <property type="entry name" value="Dicer_dimer"/>
    <property type="match status" value="1"/>
</dbReference>
<dbReference type="Pfam" id="PF00271">
    <property type="entry name" value="Helicase_C"/>
    <property type="match status" value="1"/>
</dbReference>
<dbReference type="Pfam" id="PF00636">
    <property type="entry name" value="Ribonuclease_3"/>
    <property type="match status" value="2"/>
</dbReference>
<dbReference type="SMART" id="SM00487">
    <property type="entry name" value="DEXDc"/>
    <property type="match status" value="1"/>
</dbReference>
<dbReference type="SMART" id="SM00490">
    <property type="entry name" value="HELICc"/>
    <property type="match status" value="1"/>
</dbReference>
<dbReference type="SMART" id="SM00535">
    <property type="entry name" value="RIBOc"/>
    <property type="match status" value="2"/>
</dbReference>
<dbReference type="SUPFAM" id="SSF52540">
    <property type="entry name" value="P-loop containing nucleoside triphosphate hydrolases"/>
    <property type="match status" value="1"/>
</dbReference>
<dbReference type="SUPFAM" id="SSF69065">
    <property type="entry name" value="RNase III domain-like"/>
    <property type="match status" value="2"/>
</dbReference>
<dbReference type="PROSITE" id="PS51327">
    <property type="entry name" value="DICER_DSRBF"/>
    <property type="match status" value="1"/>
</dbReference>
<dbReference type="PROSITE" id="PS51192">
    <property type="entry name" value="HELICASE_ATP_BIND_1"/>
    <property type="match status" value="1"/>
</dbReference>
<dbReference type="PROSITE" id="PS51194">
    <property type="entry name" value="HELICASE_CTER"/>
    <property type="match status" value="1"/>
</dbReference>
<dbReference type="PROSITE" id="PS50142">
    <property type="entry name" value="RNASE_3_2"/>
    <property type="match status" value="2"/>
</dbReference>
<proteinExistence type="inferred from homology"/>
<gene>
    <name type="primary">dcl2-2</name>
    <name type="ORF">An11g07590</name>
</gene>
<name>DCL22_ASPNC</name>
<feature type="chain" id="PRO_0000306788" description="Dicer-like protein 2-2">
    <location>
        <begin position="1"/>
        <end position="1362"/>
    </location>
</feature>
<feature type="domain" description="Helicase ATP-binding" evidence="3">
    <location>
        <begin position="30"/>
        <end position="197"/>
    </location>
</feature>
<feature type="domain" description="Helicase C-terminal" evidence="4">
    <location>
        <begin position="343"/>
        <end position="505"/>
    </location>
</feature>
<feature type="domain" description="Dicer dsRNA-binding fold" evidence="5">
    <location>
        <begin position="536"/>
        <end position="630"/>
    </location>
</feature>
<feature type="domain" description="RNase III 1" evidence="2">
    <location>
        <begin position="889"/>
        <end position="1033"/>
    </location>
</feature>
<feature type="domain" description="RNase III 2" evidence="2">
    <location>
        <begin position="1075"/>
        <end position="1258"/>
    </location>
</feature>
<feature type="short sequence motif" description="DEAH box">
    <location>
        <begin position="139"/>
        <end position="142"/>
    </location>
</feature>
<feature type="binding site" evidence="3">
    <location>
        <begin position="43"/>
        <end position="50"/>
    </location>
    <ligand>
        <name>ATP</name>
        <dbReference type="ChEBI" id="CHEBI:30616"/>
    </ligand>
</feature>
<sequence>MTSSTDYHADSTPGTTSNMELRIREYQLEMLNESLKRNLIVVMPTGTGKTQVAILRILADIDKGNSDKFVWLLCPTVALSEQQYIQYATVFLPSGAEDKAIWDNALSGIKIAVSTYQVLYDALSHGFVKLSQMSLLIFDEAHHCKKDHVANKIMQVHYHKQHQSGVQNLPKILGLTASPILSDLSSLEIVESNLGSICKTPRQYYAQLLQFTNRPLILPRLPTYTIPNCSVKAPILEKLCGILSSEDEVPSSSKMKSKQLKHIRRFMQTSESINQELGIWAATEYMRKSIMHFKESMRMGAEKTNISNYGKDFAMEILTRLGKLQDCSPAIQPEEISPMCQCLLDELSKAYREGFCGLVFVTQRATVLALKWLIENHPLTSHLFTCGTFIGMSTTQYSKTELGNLHDIRNQTETLEKFRQGSLNLIITTDALEEGIDVPACNTVLNFNCQLSLKSFIQRRGRARRENSQFIIIMEDESGPRYLKRLEMEEIELVQKLQNAERRQIPANELDFDKYERISLSLDIDRTGAQLIMREAVGYLYNFCSKLPAQLYVSNKPLFTYERNNYGRFRAVVKLPSNLDPSLQSFSSSRSWSRLKYAREDAALQAYKALYQAGLVNDYLVPTQVSDHLEGDIIFRSHYSIQNQLDPWQDIALLWKLDSQLYAHNLRIIRPEEDEIHLHMILPTQLDTTIHIPLFIDYCTTYTAILTPGHPITTDISLCQQVTNLIFQSVYRDHCSRRNLDYAFLLVPELEETKLIEFLERYSGSVSLTELLNQEATPSALGLLRSHTRPSRPLLVEPWVAGECFLPDELSISSFDAKVKYMTNRRNFLSHGNLAAGKSTNCEARIGLEANVKSMSVRDFFVDKLPSMFAQVALFTPSISHEVEVYMIAQILRQELSLRSVTPWQRIDLLAIAIRPTSIEHRATFRLLAFIGDAFMKYLFAMQLFLHHHLWHEGLLSSLKQRNLSDAGLAHAIHQSGLGKFLISKHLNGKRWVPPLVSGIEPASNEARQRSIGAATLADMTKAVVGAAFTDGGLNQAAACASVMFPKLKSWNASSLHDGTYSKTRPENAVASTAIVDMEELLGYTFTDKSLAVESMTHPSCTGLVQTTSYRRLSFLGASVLEWIVVSYLHRHAQVMNPQRMQSLKSAFTNNTFLTFIAITFHQVREQNHIDVDDEHNVHKNVTTCSIRLWDFLRLHSDALSTELSDFVQKSSEKADAIKHELWEQRFYPWVRLRALGDMRVLSDIIQSIFGAVFIDSQATLASCDALAEKLGIVPLLEHFISHQITTDHPKDTLQAILPGRKVSYQICVDKVHPGTLRCSALADSSEIASVEGQMNDEVIKMQAAETAVRLLRKGFALSETS</sequence>
<reference key="1">
    <citation type="journal article" date="2007" name="Nat. Biotechnol.">
        <title>Genome sequencing and analysis of the versatile cell factory Aspergillus niger CBS 513.88.</title>
        <authorList>
            <person name="Pel H.J."/>
            <person name="de Winde J.H."/>
            <person name="Archer D.B."/>
            <person name="Dyer P.S."/>
            <person name="Hofmann G."/>
            <person name="Schaap P.J."/>
            <person name="Turner G."/>
            <person name="de Vries R.P."/>
            <person name="Albang R."/>
            <person name="Albermann K."/>
            <person name="Andersen M.R."/>
            <person name="Bendtsen J.D."/>
            <person name="Benen J.A.E."/>
            <person name="van den Berg M."/>
            <person name="Breestraat S."/>
            <person name="Caddick M.X."/>
            <person name="Contreras R."/>
            <person name="Cornell M."/>
            <person name="Coutinho P.M."/>
            <person name="Danchin E.G.J."/>
            <person name="Debets A.J.M."/>
            <person name="Dekker P."/>
            <person name="van Dijck P.W.M."/>
            <person name="van Dijk A."/>
            <person name="Dijkhuizen L."/>
            <person name="Driessen A.J.M."/>
            <person name="d'Enfert C."/>
            <person name="Geysens S."/>
            <person name="Goosen C."/>
            <person name="Groot G.S.P."/>
            <person name="de Groot P.W.J."/>
            <person name="Guillemette T."/>
            <person name="Henrissat B."/>
            <person name="Herweijer M."/>
            <person name="van den Hombergh J.P.T.W."/>
            <person name="van den Hondel C.A.M.J.J."/>
            <person name="van der Heijden R.T.J.M."/>
            <person name="van der Kaaij R.M."/>
            <person name="Klis F.M."/>
            <person name="Kools H.J."/>
            <person name="Kubicek C.P."/>
            <person name="van Kuyk P.A."/>
            <person name="Lauber J."/>
            <person name="Lu X."/>
            <person name="van der Maarel M.J.E.C."/>
            <person name="Meulenberg R."/>
            <person name="Menke H."/>
            <person name="Mortimer M.A."/>
            <person name="Nielsen J."/>
            <person name="Oliver S.G."/>
            <person name="Olsthoorn M."/>
            <person name="Pal K."/>
            <person name="van Peij N.N.M.E."/>
            <person name="Ram A.F.J."/>
            <person name="Rinas U."/>
            <person name="Roubos J.A."/>
            <person name="Sagt C.M.J."/>
            <person name="Schmoll M."/>
            <person name="Sun J."/>
            <person name="Ussery D."/>
            <person name="Varga J."/>
            <person name="Vervecken W."/>
            <person name="van de Vondervoort P.J.J."/>
            <person name="Wedler H."/>
            <person name="Woesten H.A.B."/>
            <person name="Zeng A.-P."/>
            <person name="van Ooyen A.J.J."/>
            <person name="Visser J."/>
            <person name="Stam H."/>
        </authorList>
    </citation>
    <scope>NUCLEOTIDE SEQUENCE [LARGE SCALE GENOMIC DNA]</scope>
    <source>
        <strain>ATCC MYA-4892 / CBS 513.88 / FGSC A1513</strain>
    </source>
</reference>
<accession>A2QX45</accession>